<organism>
    <name type="scientific">Enterobacter sp. (strain 638)</name>
    <dbReference type="NCBI Taxonomy" id="399742"/>
    <lineage>
        <taxon>Bacteria</taxon>
        <taxon>Pseudomonadati</taxon>
        <taxon>Pseudomonadota</taxon>
        <taxon>Gammaproteobacteria</taxon>
        <taxon>Enterobacterales</taxon>
        <taxon>Enterobacteriaceae</taxon>
        <taxon>Enterobacter</taxon>
    </lineage>
</organism>
<reference key="1">
    <citation type="journal article" date="2010" name="PLoS Genet.">
        <title>Genome sequence of the plant growth promoting endophytic bacterium Enterobacter sp. 638.</title>
        <authorList>
            <person name="Taghavi S."/>
            <person name="van der Lelie D."/>
            <person name="Hoffman A."/>
            <person name="Zhang Y.B."/>
            <person name="Walla M.D."/>
            <person name="Vangronsveld J."/>
            <person name="Newman L."/>
            <person name="Monchy S."/>
        </authorList>
    </citation>
    <scope>NUCLEOTIDE SEQUENCE [LARGE SCALE GENOMIC DNA]</scope>
    <source>
        <strain>638</strain>
    </source>
</reference>
<gene>
    <name evidence="1" type="primary">aceK</name>
    <name type="ordered locus">Ent638_0220</name>
</gene>
<dbReference type="EC" id="2.7.11.5" evidence="1"/>
<dbReference type="EC" id="3.1.3.-" evidence="1"/>
<dbReference type="EMBL" id="CP000653">
    <property type="protein sequence ID" value="ABP58910.1"/>
    <property type="molecule type" value="Genomic_DNA"/>
</dbReference>
<dbReference type="RefSeq" id="WP_011915483.1">
    <property type="nucleotide sequence ID" value="NC_009436.1"/>
</dbReference>
<dbReference type="SMR" id="A4W5D0"/>
<dbReference type="STRING" id="399742.Ent638_0220"/>
<dbReference type="KEGG" id="ent:Ent638_0220"/>
<dbReference type="eggNOG" id="COG4579">
    <property type="taxonomic scope" value="Bacteria"/>
</dbReference>
<dbReference type="HOGENOM" id="CLU_033804_1_1_6"/>
<dbReference type="OrthoDB" id="5287793at2"/>
<dbReference type="Proteomes" id="UP000000230">
    <property type="component" value="Chromosome"/>
</dbReference>
<dbReference type="GO" id="GO:0005737">
    <property type="term" value="C:cytoplasm"/>
    <property type="evidence" value="ECO:0007669"/>
    <property type="project" value="UniProtKB-SubCell"/>
</dbReference>
<dbReference type="GO" id="GO:0008772">
    <property type="term" value="F:[isocitrate dehydrogenase (NADP+)] kinase activity"/>
    <property type="evidence" value="ECO:0007669"/>
    <property type="project" value="UniProtKB-UniRule"/>
</dbReference>
<dbReference type="GO" id="GO:0016208">
    <property type="term" value="F:AMP binding"/>
    <property type="evidence" value="ECO:0007669"/>
    <property type="project" value="TreeGrafter"/>
</dbReference>
<dbReference type="GO" id="GO:0005524">
    <property type="term" value="F:ATP binding"/>
    <property type="evidence" value="ECO:0007669"/>
    <property type="project" value="UniProtKB-UniRule"/>
</dbReference>
<dbReference type="GO" id="GO:0004721">
    <property type="term" value="F:phosphoprotein phosphatase activity"/>
    <property type="evidence" value="ECO:0007669"/>
    <property type="project" value="UniProtKB-KW"/>
</dbReference>
<dbReference type="GO" id="GO:0004674">
    <property type="term" value="F:protein serine/threonine kinase activity"/>
    <property type="evidence" value="ECO:0007669"/>
    <property type="project" value="UniProtKB-KW"/>
</dbReference>
<dbReference type="GO" id="GO:0006006">
    <property type="term" value="P:glucose metabolic process"/>
    <property type="evidence" value="ECO:0007669"/>
    <property type="project" value="InterPro"/>
</dbReference>
<dbReference type="GO" id="GO:0006097">
    <property type="term" value="P:glyoxylate cycle"/>
    <property type="evidence" value="ECO:0007669"/>
    <property type="project" value="UniProtKB-UniRule"/>
</dbReference>
<dbReference type="GO" id="GO:0006099">
    <property type="term" value="P:tricarboxylic acid cycle"/>
    <property type="evidence" value="ECO:0007669"/>
    <property type="project" value="UniProtKB-UniRule"/>
</dbReference>
<dbReference type="HAMAP" id="MF_00747">
    <property type="entry name" value="AceK"/>
    <property type="match status" value="1"/>
</dbReference>
<dbReference type="InterPro" id="IPR046855">
    <property type="entry name" value="AceK_kinase"/>
</dbReference>
<dbReference type="InterPro" id="IPR046854">
    <property type="entry name" value="AceK_regulatory"/>
</dbReference>
<dbReference type="InterPro" id="IPR010452">
    <property type="entry name" value="Isocitrate_DH_AceK"/>
</dbReference>
<dbReference type="NCBIfam" id="NF002804">
    <property type="entry name" value="PRK02946.1"/>
    <property type="match status" value="1"/>
</dbReference>
<dbReference type="PANTHER" id="PTHR39559">
    <property type="match status" value="1"/>
</dbReference>
<dbReference type="PANTHER" id="PTHR39559:SF1">
    <property type="entry name" value="ISOCITRATE DEHYDROGENASE KINASE_PHOSPHATASE"/>
    <property type="match status" value="1"/>
</dbReference>
<dbReference type="Pfam" id="PF06315">
    <property type="entry name" value="AceK_kinase"/>
    <property type="match status" value="1"/>
</dbReference>
<dbReference type="Pfam" id="PF20423">
    <property type="entry name" value="AceK_regulatory"/>
    <property type="match status" value="1"/>
</dbReference>
<dbReference type="PIRSF" id="PIRSF000719">
    <property type="entry name" value="AceK"/>
    <property type="match status" value="1"/>
</dbReference>
<protein>
    <recommendedName>
        <fullName evidence="1">Isocitrate dehydrogenase kinase/phosphatase</fullName>
        <shortName evidence="1">IDH kinase/phosphatase</shortName>
        <shortName evidence="1">IDHK/P</shortName>
        <ecNumber evidence="1">2.7.11.5</ecNumber>
        <ecNumber evidence="1">3.1.3.-</ecNumber>
    </recommendedName>
</protein>
<feature type="chain" id="PRO_0000315265" description="Isocitrate dehydrogenase kinase/phosphatase">
    <location>
        <begin position="1"/>
        <end position="573"/>
    </location>
</feature>
<feature type="active site" evidence="1">
    <location>
        <position position="371"/>
    </location>
</feature>
<feature type="binding site" evidence="1">
    <location>
        <begin position="315"/>
        <end position="321"/>
    </location>
    <ligand>
        <name>ATP</name>
        <dbReference type="ChEBI" id="CHEBI:30616"/>
    </ligand>
</feature>
<feature type="binding site" evidence="1">
    <location>
        <position position="336"/>
    </location>
    <ligand>
        <name>ATP</name>
        <dbReference type="ChEBI" id="CHEBI:30616"/>
    </ligand>
</feature>
<comment type="function">
    <text evidence="1">Bifunctional enzyme which can phosphorylate or dephosphorylate isocitrate dehydrogenase (IDH) on a specific serine residue. This is a regulatory mechanism which enables bacteria to bypass the Krebs cycle via the glyoxylate shunt in response to the source of carbon. When bacteria are grown on glucose, IDH is fully active and unphosphorylated, but when grown on acetate or ethanol, the activity of IDH declines drastically concomitant with its phosphorylation.</text>
</comment>
<comment type="catalytic activity">
    <reaction evidence="1">
        <text>L-seryl-[isocitrate dehydrogenase] + ATP = O-phospho-L-seryl-[isocitrate dehydrogenase] + ADP + H(+)</text>
        <dbReference type="Rhea" id="RHEA:43540"/>
        <dbReference type="Rhea" id="RHEA-COMP:10605"/>
        <dbReference type="Rhea" id="RHEA-COMP:10606"/>
        <dbReference type="ChEBI" id="CHEBI:15378"/>
        <dbReference type="ChEBI" id="CHEBI:29999"/>
        <dbReference type="ChEBI" id="CHEBI:30616"/>
        <dbReference type="ChEBI" id="CHEBI:83421"/>
        <dbReference type="ChEBI" id="CHEBI:456216"/>
        <dbReference type="EC" id="2.7.11.5"/>
    </reaction>
</comment>
<comment type="subcellular location">
    <subcellularLocation>
        <location evidence="1">Cytoplasm</location>
    </subcellularLocation>
</comment>
<comment type="similarity">
    <text evidence="1">Belongs to the AceK family.</text>
</comment>
<name>ACEK_ENT38</name>
<proteinExistence type="inferred from homology"/>
<evidence type="ECO:0000255" key="1">
    <source>
        <dbReference type="HAMAP-Rule" id="MF_00747"/>
    </source>
</evidence>
<sequence length="573" mass="66734">MSRGLELLIAQTILQGFDAQYGRFLEVTSGAQQRFEHADWHAVQQAMKQRIHLYDHHVGLVVEQLRCITEGKSTDVDFLLRVKEHYTHLLPDYPRFEIAESFFNSVYCRLFDHRSLSPERLFIFSSQPARRFRAIPRPLAKDFFPEKGWEKALNNVLSDLPLRLPWQNKTRDVGYISAHLVETLGEETLRHSHLQVANELFFRNKAAWLVGKLITPDATLPFLLPIHRSDDGELFVDTCLTTSAEASIVFGFARSYFMVYAPFPAALVEWLREILPVKTTAELYMAIGCQKHAKTESYREYLYYITSTDEQFIEAPGIRGMVMLVFTLPGFDRVFKVIKDQFAPQKEMTAAHVRACYQLVKEHDRVGRMADTQEFENFVLDKRQIDPTLMALLLQEAPDKITDLGDKIAISHLYIERRMVPLNIWLEQVEGAQLRDAIEEYGNAIRQLAAANIFPGDMLFKNFGVTRHGRVVFYDYDEICYMTEVNFRTIPAARYPEDELASEPWYSVSPGDVFPEEFRHWLCADPRIGPLFEEMHDDLFRADYWRSLQTRIKEGHVEDVYAYRKRQRFCLRG</sequence>
<keyword id="KW-0067">ATP-binding</keyword>
<keyword id="KW-0963">Cytoplasm</keyword>
<keyword id="KW-0329">Glyoxylate bypass</keyword>
<keyword id="KW-0378">Hydrolase</keyword>
<keyword id="KW-0418">Kinase</keyword>
<keyword id="KW-0547">Nucleotide-binding</keyword>
<keyword id="KW-0904">Protein phosphatase</keyword>
<keyword id="KW-0723">Serine/threonine-protein kinase</keyword>
<keyword id="KW-0808">Transferase</keyword>
<keyword id="KW-0816">Tricarboxylic acid cycle</keyword>
<accession>A4W5D0</accession>